<feature type="chain" id="PRO_0000075468" description="Transposase for insertion sequences IS1326/IS1353">
    <location>
        <begin position="1"/>
        <end position="507"/>
    </location>
</feature>
<feature type="domain" description="HTH IS21-type" evidence="2">
    <location>
        <begin position="6"/>
        <end position="68"/>
    </location>
</feature>
<feature type="domain" description="Integrase catalytic" evidence="1">
    <location>
        <begin position="122"/>
        <end position="302"/>
    </location>
</feature>
<feature type="DNA-binding region" description="H-T-H motif" evidence="2">
    <location>
        <begin position="19"/>
        <end position="40"/>
    </location>
</feature>
<name>TRA6_PSEAI</name>
<evidence type="ECO:0000255" key="1">
    <source>
        <dbReference type="PROSITE-ProRule" id="PRU00457"/>
    </source>
</evidence>
<evidence type="ECO:0000255" key="2">
    <source>
        <dbReference type="PROSITE-ProRule" id="PRU00615"/>
    </source>
</evidence>
<evidence type="ECO:0000305" key="3"/>
<sequence>MINVAILSAIRRWHFRDGASIREIARRSGLSRNTVRKYLQSKVVEPQYPARDSVGKLSPFEPKLRQWLSTEHKKTKKLRRNLRSMYRDLVALGFTGSYDRVCAFARQWKDSEQFKAQTSGKGCFIPLRFACGEAFQFDWSEDFARIAGKQVKLQIAQFKLAHSRAFVLRAYYQQKHEMLFDAHWHAFQIFGGIPKRGIYDNMKTAVDSVGRGKERRVNQRFTAMVSHYLFDAQFCNPASGWEKGQIEKNVQDSRQRLWQGAPDFQSLADLNVWLEHRCKALWSELRHPELDQTVQEAFADEQGELMALPNAFDAFVEQTKRVTSTCLVHHEGNRYSVPASYANRAISLRIYADKLVMAAEGQHIAEHPRLFGSGHARRGHTQYDWHHYLSVLQKKPGALRNGAPFAELPPAFKKLQSILLQRPGGDRDMVEILALVLHHDEGAVLSAVELALECGKPSKEHVLNLLGRLTEEPPPKPIPIPKGLRLTLEPQANVNRYDSLRRAHDAA</sequence>
<protein>
    <recommendedName>
        <fullName>Transposase for insertion sequences IS1326/IS1353</fullName>
    </recommendedName>
</protein>
<geneLocation type="plasmid">
    <name>pVS1</name>
</geneLocation>
<proteinExistence type="inferred from homology"/>
<reference key="1">
    <citation type="journal article" date="1996" name="J. Bacteriol.">
        <title>The integrons In0, In2, and In5 are defective transposon derivatives.</title>
        <authorList>
            <person name="Brown H.J."/>
            <person name="Stokes H.W."/>
            <person name="Hall R.M."/>
        </authorList>
    </citation>
    <scope>NUCLEOTIDE SEQUENCE [GENOMIC DNA]</scope>
    <source>
        <transposon>In0</transposon>
    </source>
</reference>
<accession>P0A134</accession>
<accession>Q57541</accession>
<keyword id="KW-0233">DNA recombination</keyword>
<keyword id="KW-0238">DNA-binding</keyword>
<keyword id="KW-0614">Plasmid</keyword>
<keyword id="KW-0814">Transposable element</keyword>
<keyword id="KW-0815">Transposition</keyword>
<organism>
    <name type="scientific">Pseudomonas aeruginosa</name>
    <dbReference type="NCBI Taxonomy" id="287"/>
    <lineage>
        <taxon>Bacteria</taxon>
        <taxon>Pseudomonadati</taxon>
        <taxon>Pseudomonadota</taxon>
        <taxon>Gammaproteobacteria</taxon>
        <taxon>Pseudomonadales</taxon>
        <taxon>Pseudomonadaceae</taxon>
        <taxon>Pseudomonas</taxon>
    </lineage>
</organism>
<gene>
    <name type="primary">istA</name>
</gene>
<dbReference type="EMBL" id="U49101">
    <property type="protein sequence ID" value="AAC44320.1"/>
    <property type="molecule type" value="Genomic_DNA"/>
</dbReference>
<dbReference type="RefSeq" id="WP_001324342.1">
    <property type="nucleotide sequence ID" value="NZ_WUAE01000027.1"/>
</dbReference>
<dbReference type="SMR" id="P0A134"/>
<dbReference type="GO" id="GO:0003677">
    <property type="term" value="F:DNA binding"/>
    <property type="evidence" value="ECO:0007669"/>
    <property type="project" value="UniProtKB-KW"/>
</dbReference>
<dbReference type="GO" id="GO:0015074">
    <property type="term" value="P:DNA integration"/>
    <property type="evidence" value="ECO:0007669"/>
    <property type="project" value="InterPro"/>
</dbReference>
<dbReference type="GO" id="GO:0006310">
    <property type="term" value="P:DNA recombination"/>
    <property type="evidence" value="ECO:0007669"/>
    <property type="project" value="UniProtKB-KW"/>
</dbReference>
<dbReference type="GO" id="GO:0032196">
    <property type="term" value="P:transposition"/>
    <property type="evidence" value="ECO:0007669"/>
    <property type="project" value="UniProtKB-KW"/>
</dbReference>
<dbReference type="Gene3D" id="1.10.10.60">
    <property type="entry name" value="Homeodomain-like"/>
    <property type="match status" value="1"/>
</dbReference>
<dbReference type="Gene3D" id="3.30.420.10">
    <property type="entry name" value="Ribonuclease H-like superfamily/Ribonuclease H"/>
    <property type="match status" value="1"/>
</dbReference>
<dbReference type="InterPro" id="IPR017894">
    <property type="entry name" value="HTH_IS21_transposase_type"/>
</dbReference>
<dbReference type="InterPro" id="IPR001584">
    <property type="entry name" value="Integrase_cat-core"/>
</dbReference>
<dbReference type="InterPro" id="IPR054353">
    <property type="entry name" value="IstA-like_C"/>
</dbReference>
<dbReference type="InterPro" id="IPR036397">
    <property type="entry name" value="RNaseH_sf"/>
</dbReference>
<dbReference type="NCBIfam" id="NF033546">
    <property type="entry name" value="transpos_IS21"/>
    <property type="match status" value="1"/>
</dbReference>
<dbReference type="PANTHER" id="PTHR35004:SF7">
    <property type="entry name" value="INTEGRASE PROTEIN"/>
    <property type="match status" value="1"/>
</dbReference>
<dbReference type="PANTHER" id="PTHR35004">
    <property type="entry name" value="TRANSPOSASE RV3428C-RELATED"/>
    <property type="match status" value="1"/>
</dbReference>
<dbReference type="Pfam" id="PF22483">
    <property type="entry name" value="Mu-transpos_C_2"/>
    <property type="match status" value="1"/>
</dbReference>
<dbReference type="PROSITE" id="PS50531">
    <property type="entry name" value="HTH_IS21"/>
    <property type="match status" value="1"/>
</dbReference>
<dbReference type="PROSITE" id="PS50994">
    <property type="entry name" value="INTEGRASE"/>
    <property type="match status" value="1"/>
</dbReference>
<comment type="function">
    <text evidence="3">Required for the transposition of the insertion element.</text>
</comment>
<comment type="similarity">
    <text evidence="3">Belongs to the transposase IS21/IS408/IS1162 family.</text>
</comment>